<sequence length="899" mass="103496">MADPPDANVPKTSPYLKGDELSSDSGPLLSIFALQEIMQKVRQAQSEYVAATKDVDLTVPDVQKIIDGVKELASETIYKIVQKPIISYRHVVMQSRDRFLRVDTYYERMSEVGDKIDENEPAKFYETVIKKVRHLRTEGAFILHNIPTKDHRGMEIADPEILGVDVKSILPVLTAEHRAMIQHVLDGAIIENGNIATRDVDVYLGACSESVYRIYNRLQGYIEAVQLEELRRTVTWLERLGKRKRMTFSQEFLTDFRRVDTIWVLALRLPANPRVIWDVPRCSIANLIMNIATCLPTGDMFRPNPRIASITLTQRITTTGPFAILTGSTPTAQQLDDVRKIYLALMFPGQIILDLKIDPGERMDPAVRMVAGVVGHLMFTAGPRFTNITQNMARQLDIALADFLLYMYNTRIQVQYGPTGEPLDFRIGRGQYDCNVFRANFQTGTGYNGWGLVDVENREPAPYDHAQRYIRYCNIDSRELIHPATFGIGMNYHCYNEMLRMLVAAGKDTEAAFFRNMLPFHMVRFARINQVINEDLHSAFSMPDDQFNVLLANMVVGQQERVDPVILDISWISIWYAFNRSFEPIRRNEMLESAPLIESVYASELTVMKTDMQQMALLQRRFPDVLIEARPTHFWKAVMEVSPEPVRAIMDLAHSHSFINIRDMMRWIGLPSMQNSMKLVLEEEAWAVANDFEELMLTDQVYMYRDMLPEPRLDDIERFRQEGFYYTNMLDGPPAIDRVVQYTYEVARFEANMGQLRAALRRIMDDERWVRFGGVLRTVRIKFFDSRPPEEILQALPFDYQTNEKGGLTYATIKYANDTTIYYLIYNVEYSNLPDSLVLINPTYVMTKVFMNKRIVERVRVGQALAVMNKRFIAFKGKMRIMDISQALKVGTKLAAPTV</sequence>
<reference key="1">
    <citation type="journal article" date="1991" name="J. Virol.">
        <title>Synthesis and characterization of chimeric particles between epizootic hemorrhagic disease virus and bluetongue virus: functional domains are conserved on the VP3 protein.</title>
        <authorList>
            <person name="le Blois H."/>
            <person name="Fayard B."/>
            <person name="Urakawa T."/>
            <person name="Roy P."/>
        </authorList>
    </citation>
    <scope>NUCLEOTIDE SEQUENCE [GENOMIC RNA]</scope>
</reference>
<reference key="2">
    <citation type="journal article" date="1991" name="Virus Res.">
        <title>Molecular comparison of VP3 from bluetongue and epizootic hemorrhagic disease viruses.</title>
        <authorList>
            <person name="Wilson W.C."/>
        </authorList>
    </citation>
    <scope>NUCLEOTIDE SEQUENCE [GENOMIC RNA]</scope>
</reference>
<organism>
    <name type="scientific">Epizootic hemorrhagic disease virus 1</name>
    <name type="common">EHDV-1</name>
    <dbReference type="NCBI Taxonomy" id="33720"/>
    <lineage>
        <taxon>Viruses</taxon>
        <taxon>Riboviria</taxon>
        <taxon>Orthornavirae</taxon>
        <taxon>Duplornaviricota</taxon>
        <taxon>Resentoviricetes</taxon>
        <taxon>Reovirales</taxon>
        <taxon>Sedoreoviridae</taxon>
        <taxon>Orbivirus</taxon>
        <taxon>Epizootic hemorrhagic disease virus</taxon>
    </lineage>
</organism>
<evidence type="ECO:0000256" key="1">
    <source>
        <dbReference type="SAM" id="MobiDB-lite"/>
    </source>
</evidence>
<evidence type="ECO:0000305" key="2"/>
<dbReference type="EMBL" id="M76616">
    <property type="protein sequence ID" value="AAA43002.1"/>
    <property type="molecule type" value="Genomic_RNA"/>
</dbReference>
<dbReference type="EMBL" id="X61589">
    <property type="protein sequence ID" value="CAA43786.1"/>
    <property type="molecule type" value="Genomic_RNA"/>
</dbReference>
<dbReference type="PIR" id="A40900">
    <property type="entry name" value="P3XREH"/>
</dbReference>
<dbReference type="SMR" id="P27281"/>
<dbReference type="GO" id="GO:0044423">
    <property type="term" value="C:virion component"/>
    <property type="evidence" value="ECO:0007669"/>
    <property type="project" value="UniProtKB-KW"/>
</dbReference>
<dbReference type="GO" id="GO:0005198">
    <property type="term" value="F:structural molecule activity"/>
    <property type="evidence" value="ECO:0007669"/>
    <property type="project" value="InterPro"/>
</dbReference>
<dbReference type="InterPro" id="IPR002614">
    <property type="entry name" value="Inner_layer_core_VP3_Orbivir"/>
</dbReference>
<dbReference type="InterPro" id="IPR016029">
    <property type="entry name" value="Inner_layer_core_VP3_Reovir"/>
</dbReference>
<dbReference type="Pfam" id="PF01700">
    <property type="entry name" value="Orbi_VP3"/>
    <property type="match status" value="1"/>
</dbReference>
<dbReference type="SUPFAM" id="SSF56831">
    <property type="entry name" value="Reovirus inner layer core protein p3"/>
    <property type="match status" value="1"/>
</dbReference>
<keyword id="KW-0946">Virion</keyword>
<proteinExistence type="inferred from homology"/>
<gene>
    <name type="primary">Segment-3</name>
    <name type="synonym">L3</name>
</gene>
<accession>P27281</accession>
<feature type="chain" id="PRO_0000222701" description="Core protein VP3">
    <location>
        <begin position="1"/>
        <end position="899"/>
    </location>
</feature>
<feature type="region of interest" description="Disordered" evidence="1">
    <location>
        <begin position="1"/>
        <end position="21"/>
    </location>
</feature>
<feature type="sequence conflict" description="In Ref. 2; CAA43786." evidence="2" ref="2">
    <original>RT</original>
    <variation>AA</variation>
    <location>
        <begin position="232"/>
        <end position="233"/>
    </location>
</feature>
<feature type="sequence conflict" description="In Ref. 2; CAA43786." evidence="2" ref="2">
    <original>DMFR</original>
    <variation>EYVS</variation>
    <location>
        <begin position="299"/>
        <end position="302"/>
    </location>
</feature>
<feature type="sequence conflict" description="In Ref. 2; CAA43786." evidence="2" ref="2">
    <original>FE</original>
    <variation>LQ</variation>
    <location>
        <begin position="749"/>
        <end position="750"/>
    </location>
</feature>
<feature type="sequence conflict" description="In Ref. 2; CAA43786." evidence="2" ref="2">
    <original>R</original>
    <variation>G</variation>
    <location>
        <position position="768"/>
    </location>
</feature>
<feature type="sequence conflict" description="In Ref. 2; CAA43786." evidence="2" ref="2">
    <original>R</original>
    <variation>L</variation>
    <location>
        <position position="787"/>
    </location>
</feature>
<feature type="sequence conflict" description="In Ref. 2; CAA43786." evidence="2" ref="2">
    <original>S</original>
    <variation>T</variation>
    <location>
        <position position="885"/>
    </location>
</feature>
<organismHost>
    <name type="scientific">Antilocapra americana</name>
    <name type="common">Pronghorn</name>
    <dbReference type="NCBI Taxonomy" id="9891"/>
</organismHost>
<organismHost>
    <name type="scientific">Odocoileus hemionus</name>
    <name type="common">Mule deer</name>
    <name type="synonym">Cervus hemionus</name>
    <dbReference type="NCBI Taxonomy" id="9872"/>
</organismHost>
<organismHost>
    <name type="scientific">Odocoileus virginianus</name>
    <name type="common">White-tailed deer</name>
    <dbReference type="NCBI Taxonomy" id="9874"/>
</organismHost>
<name>VP3_EHDV1</name>
<comment type="function">
    <text>The VP3 protein is one of the five proteins (with VP1, VP4, VP6 and VP7) which form the inner capsid of the virus.</text>
</comment>
<comment type="subcellular location">
    <subcellularLocation>
        <location evidence="2">Virion</location>
    </subcellularLocation>
</comment>
<comment type="similarity">
    <text evidence="2">Belongs to the orbivirus VP3 family.</text>
</comment>
<protein>
    <recommendedName>
        <fullName>Core protein VP3</fullName>
    </recommendedName>
</protein>